<comment type="function">
    <text evidence="1">Binds to the 23S rRNA.</text>
</comment>
<comment type="similarity">
    <text evidence="1">Belongs to the bacterial ribosomal protein bL9 family.</text>
</comment>
<sequence>MEVILLERIGRLGQMGDTVKVKDGYARNFLLPQGKALRANEANKKKFEGQRAQLEAQNLERKNEAQAVADKLNGESFIVVRSAGETGQLYGSVSTRDIAEIITADGFTLHRNQVELNHPIKTIGLHEVSVSLHPEVQVKVMVNIARSTEEAERQAKGEDLTSIEAIYGIEEQPLSEEVFDDEDEAEDQA</sequence>
<reference key="1">
    <citation type="submission" date="2007-10" db="EMBL/GenBank/DDBJ databases">
        <title>Brucella canis ATCC 23365 whole genome shotgun sequencing project.</title>
        <authorList>
            <person name="Setubal J.C."/>
            <person name="Bowns C."/>
            <person name="Boyle S."/>
            <person name="Crasta O.R."/>
            <person name="Czar M.J."/>
            <person name="Dharmanolla C."/>
            <person name="Gillespie J.J."/>
            <person name="Kenyon R.W."/>
            <person name="Lu J."/>
            <person name="Mane S."/>
            <person name="Mohapatra S."/>
            <person name="Nagrani S."/>
            <person name="Purkayastha A."/>
            <person name="Rajasimha H.K."/>
            <person name="Shallom J.M."/>
            <person name="Shallom S."/>
            <person name="Shukla M."/>
            <person name="Snyder E.E."/>
            <person name="Sobral B.W."/>
            <person name="Wattam A.R."/>
            <person name="Will R."/>
            <person name="Williams K."/>
            <person name="Yoo H."/>
            <person name="Bruce D."/>
            <person name="Detter C."/>
            <person name="Munk C."/>
            <person name="Brettin T.S."/>
        </authorList>
    </citation>
    <scope>NUCLEOTIDE SEQUENCE [LARGE SCALE GENOMIC DNA]</scope>
    <source>
        <strain>ATCC 23365 / NCTC 10854 / RM-666</strain>
    </source>
</reference>
<keyword id="KW-1185">Reference proteome</keyword>
<keyword id="KW-0687">Ribonucleoprotein</keyword>
<keyword id="KW-0689">Ribosomal protein</keyword>
<keyword id="KW-0694">RNA-binding</keyword>
<keyword id="KW-0699">rRNA-binding</keyword>
<proteinExistence type="inferred from homology"/>
<gene>
    <name evidence="1" type="primary">rplI</name>
    <name type="ordered locus">BCAN_A0457</name>
</gene>
<accession>A9M8X5</accession>
<organism>
    <name type="scientific">Brucella canis (strain ATCC 23365 / NCTC 10854 / RM-666)</name>
    <dbReference type="NCBI Taxonomy" id="483179"/>
    <lineage>
        <taxon>Bacteria</taxon>
        <taxon>Pseudomonadati</taxon>
        <taxon>Pseudomonadota</taxon>
        <taxon>Alphaproteobacteria</taxon>
        <taxon>Hyphomicrobiales</taxon>
        <taxon>Brucellaceae</taxon>
        <taxon>Brucella/Ochrobactrum group</taxon>
        <taxon>Brucella</taxon>
    </lineage>
</organism>
<evidence type="ECO:0000255" key="1">
    <source>
        <dbReference type="HAMAP-Rule" id="MF_00503"/>
    </source>
</evidence>
<evidence type="ECO:0000305" key="2"/>
<name>RL9_BRUC2</name>
<dbReference type="EMBL" id="CP000872">
    <property type="protein sequence ID" value="ABX61539.1"/>
    <property type="molecule type" value="Genomic_DNA"/>
</dbReference>
<dbReference type="RefSeq" id="WP_004691968.1">
    <property type="nucleotide sequence ID" value="NC_010103.1"/>
</dbReference>
<dbReference type="SMR" id="A9M8X5"/>
<dbReference type="GeneID" id="55590210"/>
<dbReference type="KEGG" id="bcs:BCAN_A0457"/>
<dbReference type="HOGENOM" id="CLU_078938_1_0_5"/>
<dbReference type="PhylomeDB" id="A9M8X5"/>
<dbReference type="Proteomes" id="UP000001385">
    <property type="component" value="Chromosome I"/>
</dbReference>
<dbReference type="GO" id="GO:1990904">
    <property type="term" value="C:ribonucleoprotein complex"/>
    <property type="evidence" value="ECO:0007669"/>
    <property type="project" value="UniProtKB-KW"/>
</dbReference>
<dbReference type="GO" id="GO:0005840">
    <property type="term" value="C:ribosome"/>
    <property type="evidence" value="ECO:0007669"/>
    <property type="project" value="UniProtKB-KW"/>
</dbReference>
<dbReference type="GO" id="GO:0019843">
    <property type="term" value="F:rRNA binding"/>
    <property type="evidence" value="ECO:0007669"/>
    <property type="project" value="UniProtKB-UniRule"/>
</dbReference>
<dbReference type="GO" id="GO:0003735">
    <property type="term" value="F:structural constituent of ribosome"/>
    <property type="evidence" value="ECO:0007669"/>
    <property type="project" value="InterPro"/>
</dbReference>
<dbReference type="GO" id="GO:0006412">
    <property type="term" value="P:translation"/>
    <property type="evidence" value="ECO:0007669"/>
    <property type="project" value="UniProtKB-UniRule"/>
</dbReference>
<dbReference type="Gene3D" id="3.10.430.100">
    <property type="entry name" value="Ribosomal protein L9, C-terminal domain"/>
    <property type="match status" value="1"/>
</dbReference>
<dbReference type="Gene3D" id="3.40.5.10">
    <property type="entry name" value="Ribosomal protein L9, N-terminal domain"/>
    <property type="match status" value="1"/>
</dbReference>
<dbReference type="HAMAP" id="MF_00503">
    <property type="entry name" value="Ribosomal_bL9"/>
    <property type="match status" value="1"/>
</dbReference>
<dbReference type="InterPro" id="IPR000244">
    <property type="entry name" value="Ribosomal_bL9"/>
</dbReference>
<dbReference type="InterPro" id="IPR009027">
    <property type="entry name" value="Ribosomal_bL9/RNase_H1_N"/>
</dbReference>
<dbReference type="InterPro" id="IPR020594">
    <property type="entry name" value="Ribosomal_bL9_bac/chp"/>
</dbReference>
<dbReference type="InterPro" id="IPR020069">
    <property type="entry name" value="Ribosomal_bL9_C"/>
</dbReference>
<dbReference type="InterPro" id="IPR036791">
    <property type="entry name" value="Ribosomal_bL9_C_sf"/>
</dbReference>
<dbReference type="InterPro" id="IPR020070">
    <property type="entry name" value="Ribosomal_bL9_N"/>
</dbReference>
<dbReference type="InterPro" id="IPR036935">
    <property type="entry name" value="Ribosomal_bL9_N_sf"/>
</dbReference>
<dbReference type="NCBIfam" id="TIGR00158">
    <property type="entry name" value="L9"/>
    <property type="match status" value="1"/>
</dbReference>
<dbReference type="PANTHER" id="PTHR21368">
    <property type="entry name" value="50S RIBOSOMAL PROTEIN L9"/>
    <property type="match status" value="1"/>
</dbReference>
<dbReference type="Pfam" id="PF03948">
    <property type="entry name" value="Ribosomal_L9_C"/>
    <property type="match status" value="1"/>
</dbReference>
<dbReference type="Pfam" id="PF01281">
    <property type="entry name" value="Ribosomal_L9_N"/>
    <property type="match status" value="1"/>
</dbReference>
<dbReference type="SUPFAM" id="SSF55658">
    <property type="entry name" value="L9 N-domain-like"/>
    <property type="match status" value="1"/>
</dbReference>
<dbReference type="SUPFAM" id="SSF55653">
    <property type="entry name" value="Ribosomal protein L9 C-domain"/>
    <property type="match status" value="1"/>
</dbReference>
<dbReference type="PROSITE" id="PS00651">
    <property type="entry name" value="RIBOSOMAL_L9"/>
    <property type="match status" value="1"/>
</dbReference>
<protein>
    <recommendedName>
        <fullName evidence="1">Large ribosomal subunit protein bL9</fullName>
    </recommendedName>
    <alternativeName>
        <fullName evidence="2">50S ribosomal protein L9</fullName>
    </alternativeName>
</protein>
<feature type="chain" id="PRO_1000081466" description="Large ribosomal subunit protein bL9">
    <location>
        <begin position="1"/>
        <end position="189"/>
    </location>
</feature>